<gene>
    <name type="primary">ppsE</name>
    <name type="ordered locus">Rv2935</name>
</gene>
<sequence length="1488" mass="158745">MSIPENAIAVVGMAGRFPGAKDVSAFWSNLRRGKESIVTLSEQELRDAGVSDKTLADPAYVRRAPLLDGIDEFDAGFFGFPPLAAQVLDPQHRLFLQCAWHALEDAGADPARFDGSIGVYGTSSPSGYLLHNLLSHRDPNAVLAEGLNFDQFSLFLQNDKDFLATRISHAFNLRGPSIAVQTACSSSLVAVHLACLSLLSGECDMALAGGSSLCIPHRVGYFTSPGSMVSAVGHCRPFDVRADGTVFGSGVGLVVLKPLAAAIDAGDRIHAVIRGSAINNDGSAKMGYAAPNPAAQADVIAEAHAVSGIDSSTVSYVECHGTGTPLGDPIEIQGLRAAFEVSQTSRSAPCVLGSVKSNIGHLEVAAGIAGLIKTILCLKNKALPATLHYTSPNPELRLDQSPFVVQSKYGPWECDGVRRAGVSSFGVGGTNAHVVLEEAPAEASEVSAHAEPAGPQVILLSAQTAAALGESRTALAAALETQDGPRLSDVAYTLARRRKHNVTMAAVVHDREHAATVLRAAEHDNVFVGEAAHDGEHGDRADAAPTSDRVVFLFPGQGAQHVGMAKGLYDTEPVFAQHFDTCAAGFRDETGIDLHAEVFDGTATDLERIDRSQPALFTVEYALAKLVDTFGVRAGAYIGYSTGEYIAATLAGVFDLQTAIKTVSLRARLMHESPPGAMVAVALGPDDVTQYLPPEVELSAVNDPGNCVVAGPKDQIRALRQRLTEAGIPVRRVRATHAFHTSAMDPMLGQFQEFLSRQQLRPPRTPLLSNLTGSWMSDQQVVDPASWTRQISSPIRFADELDVVLAAPSRILVEVGPGGSLTGSAMRHPKWSTTHRTVRLMRHPLQDVDDRDTFLRALGELWSAGVEVDWTPRRPAVPHLVSLPGYPFARQRHWVEPNHTVWAQAPGANNGSPAGTADGSTAATVDAARNGESQTEVTLQRIWSQCLGVSSVDRNANFFDLGGDSLMAISIAMAAANEGLTITPQDLYEYPTLASLTAAVDASFASSGLAKPPEAQANPAVPPNVTYFLDRGLRDTGRCRVPLILRLDPKIGLPDIRAVLTAVVNHHDALRLHLVGNDGIWEQHIAAPAEFTGLSNRSVPNGVAAGSPEERAAVLGILAELLEDQTDPNAPLAAVHIAAAHGGPHYLCLAIHAMVTDDSSRQILATDIVTAFGQRLAGEEITLEPVSTGWREWSLRCAALATHPAALDTRSYWIENSTKATLWLADALPNAHTAHPPRADELTKLSSTLSVEQTSELDDGRRRFRRSIQTILLAALGRTIAQTVGEGVVAVELEGEGRSVLRPDVDLRRTVGWFTTYYPVPLACATGLGALAQLDAVHNTLKSVPHYGIGYGLLRYVYAPTGRVLGAQRTPDIHFRYAGVIPELPSGDAPVQFDSDMTLPVREPIPGMGHAIELRVYRFGGSLHLDWWYDTRRIPAATAEALERTFPLALSALIQEAIAAEHTEHDDSEIVGEPEAGALVDLSSMDAG</sequence>
<evidence type="ECO:0000250" key="1"/>
<evidence type="ECO:0000255" key="2">
    <source>
        <dbReference type="PROSITE-ProRule" id="PRU00258"/>
    </source>
</evidence>
<evidence type="ECO:0000255" key="3">
    <source>
        <dbReference type="PROSITE-ProRule" id="PRU01348"/>
    </source>
</evidence>
<evidence type="ECO:0000255" key="4">
    <source>
        <dbReference type="PROSITE-ProRule" id="PRU10022"/>
    </source>
</evidence>
<evidence type="ECO:0000269" key="5">
    <source>
    </source>
</evidence>
<evidence type="ECO:0000269" key="6">
    <source>
    </source>
</evidence>
<evidence type="ECO:0000269" key="7">
    <source>
    </source>
</evidence>
<evidence type="ECO:0000269" key="8">
    <source>
    </source>
</evidence>
<evidence type="ECO:0000269" key="9">
    <source>
    </source>
</evidence>
<evidence type="ECO:0000269" key="10">
    <source>
    </source>
</evidence>
<evidence type="ECO:0000305" key="11"/>
<evidence type="ECO:0000305" key="12">
    <source>
    </source>
</evidence>
<evidence type="ECO:0007744" key="13">
    <source>
    </source>
</evidence>
<keyword id="KW-0007">Acetylation</keyword>
<keyword id="KW-0276">Fatty acid metabolism</keyword>
<keyword id="KW-0443">Lipid metabolism</keyword>
<keyword id="KW-0511">Multifunctional enzyme</keyword>
<keyword id="KW-0521">NADP</keyword>
<keyword id="KW-0560">Oxidoreductase</keyword>
<keyword id="KW-0596">Phosphopantetheine</keyword>
<keyword id="KW-0597">Phosphoprotein</keyword>
<keyword id="KW-1185">Reference proteome</keyword>
<keyword id="KW-0808">Transferase</keyword>
<name>PPSE_MYCTU</name>
<comment type="function">
    <text evidence="6 10">Part of the PpsABCDE complex involved in the biosynthesis of the lipid core common to phthiocerols and phenolphthiocerols by successive additions of malonyl-CoA or methylmalonyl-CoA extender units (PubMed:15749014, PubMed:20553505). PpsA can accept as substrate the activated forms of either icosanoyl (C20), docosanoyl (C22) or lignoceroyl (C24) groups from FadD26, or a (4-hydroxyphenyl)-C17 or (4-hydroxyphenyl)-C19 fatty acyl from FadD29 (PubMed:15749014, PubMed:20553505). PpsA initiates the biosynthesis and extends its substrate using a malonyl-CoA extender unit. The PpsB and PpsC proteins add the second and third malonyl-CoA extender units. PpsD adds an (R)-methylmalonyl unit and PpsE adds a second (R)-methylmalonyl unit. The incorporation of the methylmalonyl units results in formation of two branched methyl groups in the elongated product (PubMed:15749014).</text>
</comment>
<comment type="catalytic activity">
    <reaction evidence="6 12">
        <text>icosanoyl-[(phenol)carboxyphthiodiolenone synthase] + 2 (S)-methylmalonyl-CoA + 3 malonyl-CoA + 5 NADPH + 10 H(+) = C32-carboxyphthiodiolenone-[(phenol)carboxyphthiodiolenone synthase] + 5 CO2 + 5 NADP(+) + 5 CoA + 2 H2O</text>
        <dbReference type="Rhea" id="RHEA:57748"/>
        <dbReference type="Rhea" id="RHEA-COMP:14985"/>
        <dbReference type="Rhea" id="RHEA-COMP:14986"/>
        <dbReference type="ChEBI" id="CHEBI:15377"/>
        <dbReference type="ChEBI" id="CHEBI:15378"/>
        <dbReference type="ChEBI" id="CHEBI:16526"/>
        <dbReference type="ChEBI" id="CHEBI:57287"/>
        <dbReference type="ChEBI" id="CHEBI:57327"/>
        <dbReference type="ChEBI" id="CHEBI:57384"/>
        <dbReference type="ChEBI" id="CHEBI:57783"/>
        <dbReference type="ChEBI" id="CHEBI:58349"/>
        <dbReference type="ChEBI" id="CHEBI:87848"/>
        <dbReference type="ChEBI" id="CHEBI:142236"/>
        <dbReference type="EC" id="2.3.1.292"/>
    </reaction>
</comment>
<comment type="catalytic activity">
    <reaction evidence="6 12">
        <text>docosanoyl-[(phenol)carboxyphthiodiolenone synthase] + 2 (S)-methylmalonyl-CoA + 3 malonyl-CoA + 5 NADPH + 10 H(+) = C34-carboxyphthiodiolenone-[(phenol)carboxyphthiodiolenone synthase] + 5 CO2 + 5 NADP(+) + 5 CoA + 2 H2O</text>
        <dbReference type="Rhea" id="RHEA:57752"/>
        <dbReference type="Rhea" id="RHEA-COMP:14987"/>
        <dbReference type="Rhea" id="RHEA-COMP:14988"/>
        <dbReference type="ChEBI" id="CHEBI:15377"/>
        <dbReference type="ChEBI" id="CHEBI:15378"/>
        <dbReference type="ChEBI" id="CHEBI:16526"/>
        <dbReference type="ChEBI" id="CHEBI:57287"/>
        <dbReference type="ChEBI" id="CHEBI:57327"/>
        <dbReference type="ChEBI" id="CHEBI:57384"/>
        <dbReference type="ChEBI" id="CHEBI:57783"/>
        <dbReference type="ChEBI" id="CHEBI:58349"/>
        <dbReference type="ChEBI" id="CHEBI:142237"/>
        <dbReference type="ChEBI" id="CHEBI:142238"/>
        <dbReference type="EC" id="2.3.1.292"/>
    </reaction>
</comment>
<comment type="catalytic activity">
    <reaction evidence="6 12">
        <text>17-(4-hydroxyphenyl)heptadecanoyl-[(phenol)carboxyphthiodiolenone synthase] + 2 (S)-methylmalonyl-CoA + 3 malonyl-CoA + 5 NADPH + 10 H(+) = C35-(phenol)carboxyphthiodiolenone-[(phenol)carboxyphthiodiolenone synthase] + 5 CO2 + 5 NADP(+) + 5 CoA + 2 H2O</text>
        <dbReference type="Rhea" id="RHEA:57756"/>
        <dbReference type="Rhea" id="RHEA-COMP:14272"/>
        <dbReference type="Rhea" id="RHEA-COMP:14989"/>
        <dbReference type="ChEBI" id="CHEBI:15377"/>
        <dbReference type="ChEBI" id="CHEBI:15378"/>
        <dbReference type="ChEBI" id="CHEBI:16526"/>
        <dbReference type="ChEBI" id="CHEBI:57287"/>
        <dbReference type="ChEBI" id="CHEBI:57327"/>
        <dbReference type="ChEBI" id="CHEBI:57384"/>
        <dbReference type="ChEBI" id="CHEBI:57783"/>
        <dbReference type="ChEBI" id="CHEBI:58349"/>
        <dbReference type="ChEBI" id="CHEBI:133300"/>
        <dbReference type="ChEBI" id="CHEBI:142259"/>
        <dbReference type="EC" id="2.3.1.292"/>
    </reaction>
</comment>
<comment type="catalytic activity">
    <reaction evidence="6 12">
        <text>19-(4-hydroxyphenyl)nonadecanoyl-[(phenol)carboxyphthiodiolenone synthase] + 2 (S)-methylmalonyl-CoA + 3 malonyl-CoA + 5 NADPH + 10 H(+) = C37-(phenol)carboxyphthiodiolenone-[(phenol)carboxyphthiodiolenone synthase] + 5 CO2 + 5 NADP(+) + 5 CoA + 2 H2O</text>
        <dbReference type="Rhea" id="RHEA:57760"/>
        <dbReference type="Rhea" id="RHEA-COMP:14273"/>
        <dbReference type="Rhea" id="RHEA-COMP:14990"/>
        <dbReference type="ChEBI" id="CHEBI:15377"/>
        <dbReference type="ChEBI" id="CHEBI:15378"/>
        <dbReference type="ChEBI" id="CHEBI:16526"/>
        <dbReference type="ChEBI" id="CHEBI:57287"/>
        <dbReference type="ChEBI" id="CHEBI:57327"/>
        <dbReference type="ChEBI" id="CHEBI:57384"/>
        <dbReference type="ChEBI" id="CHEBI:57783"/>
        <dbReference type="ChEBI" id="CHEBI:58349"/>
        <dbReference type="ChEBI" id="CHEBI:133301"/>
        <dbReference type="ChEBI" id="CHEBI:142260"/>
        <dbReference type="EC" id="2.3.1.292"/>
    </reaction>
</comment>
<comment type="cofactor">
    <cofactor evidence="6">
        <name>NADP(+)</name>
        <dbReference type="ChEBI" id="CHEBI:58349"/>
    </cofactor>
</comment>
<comment type="cofactor">
    <cofactor evidence="1">
        <name>pantetheine 4'-phosphate</name>
        <dbReference type="ChEBI" id="CHEBI:47942"/>
    </cofactor>
    <text evidence="1">Binds 1 phosphopantetheine covalently.</text>
</comment>
<comment type="pathway">
    <text evidence="6 9">Lipid metabolism; fatty acid biosynthesis.</text>
</comment>
<comment type="subunit">
    <text evidence="5 7">The C-terminal region interacts with TesA (PubMed:15668773). Interacts with MmpL7 (PubMed:16201014).</text>
</comment>
<comment type="disruption phenotype">
    <text evidence="9">Deletion of this gene results in phthiocerol dimycocerosates (DIM) deficiency and decreases the ability of the bacteria to infect macrophages.</text>
</comment>
<comment type="miscellaneous">
    <text evidence="8">Was identified as a high-confidence drug target.</text>
</comment>
<feature type="initiator methionine" description="Removed" evidence="13">
    <location>
        <position position="1"/>
    </location>
</feature>
<feature type="chain" id="PRO_0000406952" description="Phenolphthiocerol/phthiocerol polyketide synthase subunit E">
    <location>
        <begin position="2"/>
        <end position="1488"/>
    </location>
</feature>
<feature type="domain" description="Ketosynthase family 3 (KS3)" evidence="3">
    <location>
        <begin position="5"/>
        <end position="438"/>
    </location>
</feature>
<feature type="domain" description="Carrier" evidence="2">
    <location>
        <begin position="930"/>
        <end position="1004"/>
    </location>
</feature>
<feature type="region of interest" description="Acyltransferase" evidence="1">
    <location>
        <begin position="551"/>
        <end position="868"/>
    </location>
</feature>
<feature type="active site" description="For beta-ketoacyl synthase activity" evidence="3">
    <location>
        <position position="184"/>
    </location>
</feature>
<feature type="active site" description="For beta-ketoacyl synthase activity" evidence="3">
    <location>
        <position position="320"/>
    </location>
</feature>
<feature type="active site" description="For beta-ketoacyl synthase activity" evidence="3">
    <location>
        <position position="361"/>
    </location>
</feature>
<feature type="active site" description="For malonyltransferase activity" evidence="4">
    <location>
        <position position="641"/>
    </location>
</feature>
<feature type="binding site" evidence="1">
    <location>
        <begin position="1286"/>
        <end position="1331"/>
    </location>
    <ligand>
        <name>NADP(+)</name>
        <dbReference type="ChEBI" id="CHEBI:58349"/>
    </ligand>
</feature>
<feature type="modified residue" description="N-acetylserine" evidence="13">
    <location>
        <position position="2"/>
    </location>
</feature>
<feature type="modified residue" description="O-(pantetheine 4'-phosphoryl)serine" evidence="2">
    <location>
        <position position="965"/>
    </location>
</feature>
<accession>P9WQE1</accession>
<accession>L0TDU0</accession>
<accession>P96204</accession>
<accession>Q7D6E9</accession>
<organism>
    <name type="scientific">Mycobacterium tuberculosis (strain ATCC 25618 / H37Rv)</name>
    <dbReference type="NCBI Taxonomy" id="83332"/>
    <lineage>
        <taxon>Bacteria</taxon>
        <taxon>Bacillati</taxon>
        <taxon>Actinomycetota</taxon>
        <taxon>Actinomycetes</taxon>
        <taxon>Mycobacteriales</taxon>
        <taxon>Mycobacteriaceae</taxon>
        <taxon>Mycobacterium</taxon>
        <taxon>Mycobacterium tuberculosis complex</taxon>
    </lineage>
</organism>
<dbReference type="EC" id="2.3.1.292" evidence="6 12"/>
<dbReference type="EMBL" id="AL123456">
    <property type="protein sequence ID" value="CCP45738.1"/>
    <property type="molecule type" value="Genomic_DNA"/>
</dbReference>
<dbReference type="PIR" id="C70984">
    <property type="entry name" value="C70984"/>
</dbReference>
<dbReference type="RefSeq" id="NP_217451.1">
    <property type="nucleotide sequence ID" value="NC_000962.3"/>
</dbReference>
<dbReference type="RefSeq" id="WP_003900602.1">
    <property type="nucleotide sequence ID" value="NZ_NVQJ01000015.1"/>
</dbReference>
<dbReference type="SMR" id="P9WQE1"/>
<dbReference type="STRING" id="83332.Rv2935"/>
<dbReference type="iPTMnet" id="P9WQE1"/>
<dbReference type="PaxDb" id="83332-Rv2935"/>
<dbReference type="GeneID" id="888210"/>
<dbReference type="KEGG" id="mtu:Rv2935"/>
<dbReference type="KEGG" id="mtv:RVBD_2935"/>
<dbReference type="TubercuList" id="Rv2935"/>
<dbReference type="eggNOG" id="COG1020">
    <property type="taxonomic scope" value="Bacteria"/>
</dbReference>
<dbReference type="eggNOG" id="COG3321">
    <property type="taxonomic scope" value="Bacteria"/>
</dbReference>
<dbReference type="InParanoid" id="P9WQE1"/>
<dbReference type="OrthoDB" id="9778690at2"/>
<dbReference type="PhylomeDB" id="P9WQE1"/>
<dbReference type="UniPathway" id="UPA00094"/>
<dbReference type="Proteomes" id="UP000001584">
    <property type="component" value="Chromosome"/>
</dbReference>
<dbReference type="GO" id="GO:0005737">
    <property type="term" value="C:cytoplasm"/>
    <property type="evidence" value="ECO:0000318"/>
    <property type="project" value="GO_Central"/>
</dbReference>
<dbReference type="GO" id="GO:0009274">
    <property type="term" value="C:peptidoglycan-based cell wall"/>
    <property type="evidence" value="ECO:0007005"/>
    <property type="project" value="MTBBASE"/>
</dbReference>
<dbReference type="GO" id="GO:0005886">
    <property type="term" value="C:plasma membrane"/>
    <property type="evidence" value="ECO:0007005"/>
    <property type="project" value="MTBBASE"/>
</dbReference>
<dbReference type="GO" id="GO:0034081">
    <property type="term" value="C:polyketide synthase complex"/>
    <property type="evidence" value="ECO:0000315"/>
    <property type="project" value="UniProtKB"/>
</dbReference>
<dbReference type="GO" id="GO:0004315">
    <property type="term" value="F:3-oxoacyl-[acyl-carrier-protein] synthase activity"/>
    <property type="evidence" value="ECO:0000314"/>
    <property type="project" value="MTBBASE"/>
</dbReference>
<dbReference type="GO" id="GO:0004312">
    <property type="term" value="F:fatty acid synthase activity"/>
    <property type="evidence" value="ECO:0000318"/>
    <property type="project" value="GO_Central"/>
</dbReference>
<dbReference type="GO" id="GO:0016491">
    <property type="term" value="F:oxidoreductase activity"/>
    <property type="evidence" value="ECO:0007669"/>
    <property type="project" value="UniProtKB-KW"/>
</dbReference>
<dbReference type="GO" id="GO:0031177">
    <property type="term" value="F:phosphopantetheine binding"/>
    <property type="evidence" value="ECO:0007669"/>
    <property type="project" value="InterPro"/>
</dbReference>
<dbReference type="GO" id="GO:0071766">
    <property type="term" value="P:Actinobacterium-type cell wall biogenesis"/>
    <property type="evidence" value="ECO:0000315"/>
    <property type="project" value="UniProtKB"/>
</dbReference>
<dbReference type="GO" id="GO:0071770">
    <property type="term" value="P:DIM/DIP cell wall layer assembly"/>
    <property type="evidence" value="ECO:0000314"/>
    <property type="project" value="MTBBASE"/>
</dbReference>
<dbReference type="GO" id="GO:0006633">
    <property type="term" value="P:fatty acid biosynthetic process"/>
    <property type="evidence" value="ECO:0000314"/>
    <property type="project" value="MTBBASE"/>
</dbReference>
<dbReference type="GO" id="GO:0008610">
    <property type="term" value="P:lipid biosynthetic process"/>
    <property type="evidence" value="ECO:0000315"/>
    <property type="project" value="UniProtKB"/>
</dbReference>
<dbReference type="CDD" id="cd00833">
    <property type="entry name" value="PKS"/>
    <property type="match status" value="1"/>
</dbReference>
<dbReference type="FunFam" id="1.10.1200.10:FF:000005">
    <property type="entry name" value="Nonribosomal peptide synthetase 1"/>
    <property type="match status" value="1"/>
</dbReference>
<dbReference type="FunFam" id="3.40.47.10:FF:000042">
    <property type="entry name" value="Polyketide synthase Pks13"/>
    <property type="match status" value="1"/>
</dbReference>
<dbReference type="Gene3D" id="3.30.70.3290">
    <property type="match status" value="1"/>
</dbReference>
<dbReference type="Gene3D" id="3.40.47.10">
    <property type="match status" value="1"/>
</dbReference>
<dbReference type="Gene3D" id="1.10.1200.10">
    <property type="entry name" value="ACP-like"/>
    <property type="match status" value="1"/>
</dbReference>
<dbReference type="Gene3D" id="3.30.559.10">
    <property type="entry name" value="Chloramphenicol acetyltransferase-like domain"/>
    <property type="match status" value="1"/>
</dbReference>
<dbReference type="Gene3D" id="3.40.366.10">
    <property type="entry name" value="Malonyl-Coenzyme A Acyl Carrier Protein, domain 2"/>
    <property type="match status" value="1"/>
</dbReference>
<dbReference type="Gene3D" id="3.30.559.30">
    <property type="entry name" value="Nonribosomal peptide synthetase, condensation domain"/>
    <property type="match status" value="1"/>
</dbReference>
<dbReference type="InterPro" id="IPR001227">
    <property type="entry name" value="Ac_transferase_dom_sf"/>
</dbReference>
<dbReference type="InterPro" id="IPR036736">
    <property type="entry name" value="ACP-like_sf"/>
</dbReference>
<dbReference type="InterPro" id="IPR014043">
    <property type="entry name" value="Acyl_transferase_dom"/>
</dbReference>
<dbReference type="InterPro" id="IPR016035">
    <property type="entry name" value="Acyl_Trfase/lysoPLipase"/>
</dbReference>
<dbReference type="InterPro" id="IPR023213">
    <property type="entry name" value="CAT-like_dom_sf"/>
</dbReference>
<dbReference type="InterPro" id="IPR001242">
    <property type="entry name" value="Condensatn"/>
</dbReference>
<dbReference type="InterPro" id="IPR018201">
    <property type="entry name" value="Ketoacyl_synth_AS"/>
</dbReference>
<dbReference type="InterPro" id="IPR014031">
    <property type="entry name" value="Ketoacyl_synth_C"/>
</dbReference>
<dbReference type="InterPro" id="IPR014030">
    <property type="entry name" value="Ketoacyl_synth_N"/>
</dbReference>
<dbReference type="InterPro" id="IPR016036">
    <property type="entry name" value="Malonyl_transacylase_ACP-bd"/>
</dbReference>
<dbReference type="InterPro" id="IPR032821">
    <property type="entry name" value="PKS_assoc"/>
</dbReference>
<dbReference type="InterPro" id="IPR020841">
    <property type="entry name" value="PKS_Beta-ketoAc_synthase_dom"/>
</dbReference>
<dbReference type="InterPro" id="IPR050091">
    <property type="entry name" value="PKS_NRPS_Biosynth_Enz"/>
</dbReference>
<dbReference type="InterPro" id="IPR020806">
    <property type="entry name" value="PKS_PP-bd"/>
</dbReference>
<dbReference type="InterPro" id="IPR009081">
    <property type="entry name" value="PP-bd_ACP"/>
</dbReference>
<dbReference type="InterPro" id="IPR016039">
    <property type="entry name" value="Thiolase-like"/>
</dbReference>
<dbReference type="PANTHER" id="PTHR43775">
    <property type="entry name" value="FATTY ACID SYNTHASE"/>
    <property type="match status" value="1"/>
</dbReference>
<dbReference type="PANTHER" id="PTHR43775:SF37">
    <property type="entry name" value="SI:DKEY-61P9.11"/>
    <property type="match status" value="1"/>
</dbReference>
<dbReference type="Pfam" id="PF00698">
    <property type="entry name" value="Acyl_transf_1"/>
    <property type="match status" value="1"/>
</dbReference>
<dbReference type="Pfam" id="PF00668">
    <property type="entry name" value="Condensation"/>
    <property type="match status" value="1"/>
</dbReference>
<dbReference type="Pfam" id="PF16197">
    <property type="entry name" value="KAsynt_C_assoc"/>
    <property type="match status" value="1"/>
</dbReference>
<dbReference type="Pfam" id="PF00109">
    <property type="entry name" value="ketoacyl-synt"/>
    <property type="match status" value="1"/>
</dbReference>
<dbReference type="Pfam" id="PF02801">
    <property type="entry name" value="Ketoacyl-synt_C"/>
    <property type="match status" value="1"/>
</dbReference>
<dbReference type="Pfam" id="PF00550">
    <property type="entry name" value="PP-binding"/>
    <property type="match status" value="1"/>
</dbReference>
<dbReference type="SMART" id="SM00827">
    <property type="entry name" value="PKS_AT"/>
    <property type="match status" value="1"/>
</dbReference>
<dbReference type="SMART" id="SM00825">
    <property type="entry name" value="PKS_KS"/>
    <property type="match status" value="1"/>
</dbReference>
<dbReference type="SMART" id="SM00823">
    <property type="entry name" value="PKS_PP"/>
    <property type="match status" value="1"/>
</dbReference>
<dbReference type="SUPFAM" id="SSF47336">
    <property type="entry name" value="ACP-like"/>
    <property type="match status" value="1"/>
</dbReference>
<dbReference type="SUPFAM" id="SSF52777">
    <property type="entry name" value="CoA-dependent acyltransferases"/>
    <property type="match status" value="2"/>
</dbReference>
<dbReference type="SUPFAM" id="SSF52151">
    <property type="entry name" value="FabD/lysophospholipase-like"/>
    <property type="match status" value="1"/>
</dbReference>
<dbReference type="SUPFAM" id="SSF55048">
    <property type="entry name" value="Probable ACP-binding domain of malonyl-CoA ACP transacylase"/>
    <property type="match status" value="1"/>
</dbReference>
<dbReference type="SUPFAM" id="SSF53901">
    <property type="entry name" value="Thiolase-like"/>
    <property type="match status" value="1"/>
</dbReference>
<dbReference type="PROSITE" id="PS50075">
    <property type="entry name" value="CARRIER"/>
    <property type="match status" value="1"/>
</dbReference>
<dbReference type="PROSITE" id="PS00606">
    <property type="entry name" value="KS3_1"/>
    <property type="match status" value="1"/>
</dbReference>
<dbReference type="PROSITE" id="PS52004">
    <property type="entry name" value="KS3_2"/>
    <property type="match status" value="1"/>
</dbReference>
<protein>
    <recommendedName>
        <fullName evidence="11">Phenolphthiocerol/phthiocerol polyketide synthase subunit E</fullName>
        <ecNumber evidence="6 12">2.3.1.292</ecNumber>
    </recommendedName>
    <alternativeName>
        <fullName>(Phenol)carboxyphthiodiolenone synthase subunit E</fullName>
    </alternativeName>
    <alternativeName>
        <fullName>Beta-ketoacyl-acyl-carrier-protein synthase I</fullName>
    </alternativeName>
    <alternativeName>
        <fullName>Phthiocerol synthesis polyketide synthase type I PpsE</fullName>
    </alternativeName>
</protein>
<reference key="1">
    <citation type="journal article" date="1998" name="Nature">
        <title>Deciphering the biology of Mycobacterium tuberculosis from the complete genome sequence.</title>
        <authorList>
            <person name="Cole S.T."/>
            <person name="Brosch R."/>
            <person name="Parkhill J."/>
            <person name="Garnier T."/>
            <person name="Churcher C.M."/>
            <person name="Harris D.E."/>
            <person name="Gordon S.V."/>
            <person name="Eiglmeier K."/>
            <person name="Gas S."/>
            <person name="Barry C.E. III"/>
            <person name="Tekaia F."/>
            <person name="Badcock K."/>
            <person name="Basham D."/>
            <person name="Brown D."/>
            <person name="Chillingworth T."/>
            <person name="Connor R."/>
            <person name="Davies R.M."/>
            <person name="Devlin K."/>
            <person name="Feltwell T."/>
            <person name="Gentles S."/>
            <person name="Hamlin N."/>
            <person name="Holroyd S."/>
            <person name="Hornsby T."/>
            <person name="Jagels K."/>
            <person name="Krogh A."/>
            <person name="McLean J."/>
            <person name="Moule S."/>
            <person name="Murphy L.D."/>
            <person name="Oliver S."/>
            <person name="Osborne J."/>
            <person name="Quail M.A."/>
            <person name="Rajandream M.A."/>
            <person name="Rogers J."/>
            <person name="Rutter S."/>
            <person name="Seeger K."/>
            <person name="Skelton S."/>
            <person name="Squares S."/>
            <person name="Squares R."/>
            <person name="Sulston J.E."/>
            <person name="Taylor K."/>
            <person name="Whitehead S."/>
            <person name="Barrell B.G."/>
        </authorList>
    </citation>
    <scope>NUCLEOTIDE SEQUENCE [LARGE SCALE GENOMIC DNA]</scope>
    <source>
        <strain>ATCC 25618 / H37Rv</strain>
    </source>
</reference>
<reference key="2">
    <citation type="journal article" date="2008" name="BMC Syst. Biol.">
        <title>targetTB: a target identification pipeline for Mycobacterium tuberculosis through an interactome, reactome and genome-scale structural analysis.</title>
        <authorList>
            <person name="Raman K."/>
            <person name="Yeturu K."/>
            <person name="Chandra N."/>
        </authorList>
    </citation>
    <scope>IDENTIFICATION AS A DRUG TARGET [LARGE SCALE ANALYSIS]</scope>
</reference>
<reference key="3">
    <citation type="journal article" date="2004" name="Mol. Genet. Genomics">
        <title>Interaction studies on proteins encoded by the phthiocerol dimycocerosate locus of Mycobacterium tuberculosis.</title>
        <authorList>
            <person name="Rao A."/>
            <person name="Ranganathan A."/>
        </authorList>
    </citation>
    <scope>INTERACTION WITH TESA</scope>
    <source>
        <strain>H37Rv</strain>
    </source>
</reference>
<reference key="4">
    <citation type="journal article" date="2005" name="Mol. Cell">
        <title>Dissecting the mechanism and assembly of a complex virulence mycobacterial lipid.</title>
        <authorList>
            <person name="Trivedi O.A."/>
            <person name="Arora P."/>
            <person name="Vats A."/>
            <person name="Ansari M.Z."/>
            <person name="Tickoo R."/>
            <person name="Sridharan V."/>
            <person name="Mohanty D."/>
            <person name="Gokhale R.S."/>
        </authorList>
    </citation>
    <scope>FUNCTION</scope>
    <scope>CATALYTIC ACTIVITY</scope>
    <scope>COFACTOR</scope>
    <scope>PATHWAY</scope>
</reference>
<reference key="5">
    <citation type="journal article" date="2005" name="PLoS Pathog.">
        <title>Interaction between polyketide synthase and transporter suggests coupled synthesis and export of virulence lipid in M. tuberculosis.</title>
        <authorList>
            <person name="Jain M."/>
            <person name="Cox J.S."/>
        </authorList>
    </citation>
    <scope>INTERACTION WITH MMPL7</scope>
</reference>
<reference key="6">
    <citation type="journal article" date="2009" name="PLoS Pathog.">
        <title>Phthiocerol dimycocerosates of M. tuberculosis participate in macrophage invasion by inducing changes in the organization of plasma membrane lipids.</title>
        <authorList>
            <person name="Astarie-Dequeker C."/>
            <person name="Le Guyader L."/>
            <person name="Malaga W."/>
            <person name="Seaphanh F.K."/>
            <person name="Chalut C."/>
            <person name="Lopez A."/>
            <person name="Guilhot C."/>
        </authorList>
    </citation>
    <scope>PATHWAY</scope>
    <scope>DISRUPTION PHENOTYPE</scope>
    <source>
        <strain>ATCC 25618 / H37Rv</strain>
    </source>
</reference>
<reference key="7">
    <citation type="journal article" date="2010" name="FEBS J.">
        <title>Delineation of the roles of FadD22, FadD26 and FadD29 in the biosynthesis of phthiocerol dimycocerosates and related compounds in Mycobacterium tuberculosis.</title>
        <authorList>
            <person name="Simeone R."/>
            <person name="Leger M."/>
            <person name="Constant P."/>
            <person name="Malaga W."/>
            <person name="Marrakchi H."/>
            <person name="Daffe M."/>
            <person name="Guilhot C."/>
            <person name="Chalut C."/>
        </authorList>
    </citation>
    <scope>FUNCTION</scope>
    <scope>CATALYTIC ACTIVITY</scope>
</reference>
<reference key="8">
    <citation type="journal article" date="2011" name="Mol. Cell. Proteomics">
        <title>Proteogenomic analysis of Mycobacterium tuberculosis by high resolution mass spectrometry.</title>
        <authorList>
            <person name="Kelkar D.S."/>
            <person name="Kumar D."/>
            <person name="Kumar P."/>
            <person name="Balakrishnan L."/>
            <person name="Muthusamy B."/>
            <person name="Yadav A.K."/>
            <person name="Shrivastava P."/>
            <person name="Marimuthu A."/>
            <person name="Anand S."/>
            <person name="Sundaram H."/>
            <person name="Kingsbury R."/>
            <person name="Harsha H.C."/>
            <person name="Nair B."/>
            <person name="Prasad T.S."/>
            <person name="Chauhan D.S."/>
            <person name="Katoch K."/>
            <person name="Katoch V.M."/>
            <person name="Kumar P."/>
            <person name="Chaerkady R."/>
            <person name="Ramachandran S."/>
            <person name="Dash D."/>
            <person name="Pandey A."/>
        </authorList>
    </citation>
    <scope>ACETYLATION [LARGE SCALE ANALYSIS] AT SER-2</scope>
    <scope>CLEAVAGE OF INITIATOR METHIONINE [LARGE SCALE ANALYSIS]</scope>
    <scope>IDENTIFICATION BY MASS SPECTROMETRY [LARGE SCALE ANALYSIS]</scope>
    <source>
        <strain>ATCC 25618 / H37Rv</strain>
    </source>
</reference>
<proteinExistence type="evidence at protein level"/>